<name>RL5_BACCQ</name>
<organism>
    <name type="scientific">Bacillus cereus (strain Q1)</name>
    <dbReference type="NCBI Taxonomy" id="361100"/>
    <lineage>
        <taxon>Bacteria</taxon>
        <taxon>Bacillati</taxon>
        <taxon>Bacillota</taxon>
        <taxon>Bacilli</taxon>
        <taxon>Bacillales</taxon>
        <taxon>Bacillaceae</taxon>
        <taxon>Bacillus</taxon>
        <taxon>Bacillus cereus group</taxon>
    </lineage>
</organism>
<gene>
    <name evidence="1" type="primary">rplE</name>
    <name type="ordered locus">BCQ_0135</name>
</gene>
<comment type="function">
    <text evidence="1">This is one of the proteins that bind and probably mediate the attachment of the 5S RNA into the large ribosomal subunit, where it forms part of the central protuberance. In the 70S ribosome it contacts protein S13 of the 30S subunit (bridge B1b), connecting the 2 subunits; this bridge is implicated in subunit movement. Contacts the P site tRNA; the 5S rRNA and some of its associated proteins might help stabilize positioning of ribosome-bound tRNAs.</text>
</comment>
<comment type="subunit">
    <text evidence="1">Part of the 50S ribosomal subunit; part of the 5S rRNA/L5/L18/L25 subcomplex. Contacts the 5S rRNA and the P site tRNA. Forms a bridge to the 30S subunit in the 70S ribosome.</text>
</comment>
<comment type="similarity">
    <text evidence="1">Belongs to the universal ribosomal protein uL5 family.</text>
</comment>
<dbReference type="EMBL" id="CP000227">
    <property type="protein sequence ID" value="ACM10650.1"/>
    <property type="molecule type" value="Genomic_DNA"/>
</dbReference>
<dbReference type="SMR" id="B9IZK6"/>
<dbReference type="KEGG" id="bcq:BCQ_0135"/>
<dbReference type="HOGENOM" id="CLU_061015_2_1_9"/>
<dbReference type="Proteomes" id="UP000000441">
    <property type="component" value="Chromosome"/>
</dbReference>
<dbReference type="GO" id="GO:1990904">
    <property type="term" value="C:ribonucleoprotein complex"/>
    <property type="evidence" value="ECO:0007669"/>
    <property type="project" value="UniProtKB-KW"/>
</dbReference>
<dbReference type="GO" id="GO:0005840">
    <property type="term" value="C:ribosome"/>
    <property type="evidence" value="ECO:0007669"/>
    <property type="project" value="UniProtKB-KW"/>
</dbReference>
<dbReference type="GO" id="GO:0019843">
    <property type="term" value="F:rRNA binding"/>
    <property type="evidence" value="ECO:0007669"/>
    <property type="project" value="UniProtKB-UniRule"/>
</dbReference>
<dbReference type="GO" id="GO:0003735">
    <property type="term" value="F:structural constituent of ribosome"/>
    <property type="evidence" value="ECO:0007669"/>
    <property type="project" value="InterPro"/>
</dbReference>
<dbReference type="GO" id="GO:0000049">
    <property type="term" value="F:tRNA binding"/>
    <property type="evidence" value="ECO:0007669"/>
    <property type="project" value="UniProtKB-UniRule"/>
</dbReference>
<dbReference type="GO" id="GO:0006412">
    <property type="term" value="P:translation"/>
    <property type="evidence" value="ECO:0007669"/>
    <property type="project" value="UniProtKB-UniRule"/>
</dbReference>
<dbReference type="FunFam" id="3.30.1440.10:FF:000001">
    <property type="entry name" value="50S ribosomal protein L5"/>
    <property type="match status" value="1"/>
</dbReference>
<dbReference type="Gene3D" id="3.30.1440.10">
    <property type="match status" value="1"/>
</dbReference>
<dbReference type="HAMAP" id="MF_01333_B">
    <property type="entry name" value="Ribosomal_uL5_B"/>
    <property type="match status" value="1"/>
</dbReference>
<dbReference type="InterPro" id="IPR002132">
    <property type="entry name" value="Ribosomal_uL5"/>
</dbReference>
<dbReference type="InterPro" id="IPR020930">
    <property type="entry name" value="Ribosomal_uL5_bac-type"/>
</dbReference>
<dbReference type="InterPro" id="IPR031309">
    <property type="entry name" value="Ribosomal_uL5_C"/>
</dbReference>
<dbReference type="InterPro" id="IPR020929">
    <property type="entry name" value="Ribosomal_uL5_CS"/>
</dbReference>
<dbReference type="InterPro" id="IPR022803">
    <property type="entry name" value="Ribosomal_uL5_dom_sf"/>
</dbReference>
<dbReference type="InterPro" id="IPR031310">
    <property type="entry name" value="Ribosomal_uL5_N"/>
</dbReference>
<dbReference type="NCBIfam" id="NF000585">
    <property type="entry name" value="PRK00010.1"/>
    <property type="match status" value="1"/>
</dbReference>
<dbReference type="PANTHER" id="PTHR11994">
    <property type="entry name" value="60S RIBOSOMAL PROTEIN L11-RELATED"/>
    <property type="match status" value="1"/>
</dbReference>
<dbReference type="Pfam" id="PF00281">
    <property type="entry name" value="Ribosomal_L5"/>
    <property type="match status" value="1"/>
</dbReference>
<dbReference type="Pfam" id="PF00673">
    <property type="entry name" value="Ribosomal_L5_C"/>
    <property type="match status" value="1"/>
</dbReference>
<dbReference type="PIRSF" id="PIRSF002161">
    <property type="entry name" value="Ribosomal_L5"/>
    <property type="match status" value="1"/>
</dbReference>
<dbReference type="SUPFAM" id="SSF55282">
    <property type="entry name" value="RL5-like"/>
    <property type="match status" value="1"/>
</dbReference>
<dbReference type="PROSITE" id="PS00358">
    <property type="entry name" value="RIBOSOMAL_L5"/>
    <property type="match status" value="1"/>
</dbReference>
<evidence type="ECO:0000255" key="1">
    <source>
        <dbReference type="HAMAP-Rule" id="MF_01333"/>
    </source>
</evidence>
<evidence type="ECO:0000305" key="2"/>
<accession>B9IZK6</accession>
<reference key="1">
    <citation type="journal article" date="2009" name="J. Bacteriol.">
        <title>Complete genome sequence of the extremophilic Bacillus cereus strain Q1 with industrial applications.</title>
        <authorList>
            <person name="Xiong Z."/>
            <person name="Jiang Y."/>
            <person name="Qi D."/>
            <person name="Lu H."/>
            <person name="Yang F."/>
            <person name="Yang J."/>
            <person name="Chen L."/>
            <person name="Sun L."/>
            <person name="Xu X."/>
            <person name="Xue Y."/>
            <person name="Zhu Y."/>
            <person name="Jin Q."/>
        </authorList>
    </citation>
    <scope>NUCLEOTIDE SEQUENCE [LARGE SCALE GENOMIC DNA]</scope>
    <source>
        <strain>Q1</strain>
    </source>
</reference>
<protein>
    <recommendedName>
        <fullName evidence="1">Large ribosomal subunit protein uL5</fullName>
    </recommendedName>
    <alternativeName>
        <fullName evidence="2">50S ribosomal protein L5</fullName>
    </alternativeName>
</protein>
<proteinExistence type="inferred from homology"/>
<keyword id="KW-0687">Ribonucleoprotein</keyword>
<keyword id="KW-0689">Ribosomal protein</keyword>
<keyword id="KW-0694">RNA-binding</keyword>
<keyword id="KW-0699">rRNA-binding</keyword>
<keyword id="KW-0820">tRNA-binding</keyword>
<feature type="chain" id="PRO_1000166111" description="Large ribosomal subunit protein uL5">
    <location>
        <begin position="1"/>
        <end position="179"/>
    </location>
</feature>
<sequence>MNRLKEKFQKEITPALMSKFNYKSVMQVPKIEKIVINTGVGDAVSNSKALDNAVEELTQIAGQKPVVTRAKKSIAGFRLREGMPIGAKVTLRGEQMYEFFDKLVSVSLPRVRDFRGVSKKSFDGRGNYTLGVKEQLIFPEIDYDKVSKVRGMDIVIVTTANTDEEARELLTQFGMPFQK</sequence>